<keyword id="KW-0002">3D-structure</keyword>
<keyword id="KW-0025">Alternative splicing</keyword>
<keyword id="KW-0175">Coiled coil</keyword>
<keyword id="KW-0963">Cytoplasm</keyword>
<keyword id="KW-0479">Metal-binding</keyword>
<keyword id="KW-0488">Methylation</keyword>
<keyword id="KW-0539">Nucleus</keyword>
<keyword id="KW-0597">Phosphoprotein</keyword>
<keyword id="KW-1267">Proteomics identification</keyword>
<keyword id="KW-1185">Reference proteome</keyword>
<keyword id="KW-0694">RNA-binding</keyword>
<keyword id="KW-0808">Transferase</keyword>
<keyword id="KW-0832">Ubl conjugation</keyword>
<keyword id="KW-0833">Ubl conjugation pathway</keyword>
<keyword id="KW-0862">Zinc</keyword>
<keyword id="KW-0863">Zinc-finger</keyword>
<gene>
    <name type="primary">CNOT4</name>
    <name type="synonym">NOT4</name>
</gene>
<accession>O95628</accession>
<accession>B7Z6I4</accession>
<accession>E7ET38</accession>
<accession>F8VQP3</accession>
<accession>O95339</accession>
<accession>O95627</accession>
<accession>Q8IYM7</accession>
<accession>Q8NCL0</accession>
<accession>Q9NPQ1</accession>
<accession>Q9NZN6</accession>
<dbReference type="EC" id="2.3.2.27" evidence="6 9 10"/>
<dbReference type="EMBL" id="U71267">
    <property type="protein sequence ID" value="AAD00179.1"/>
    <property type="status" value="ALT_FRAME"/>
    <property type="molecule type" value="mRNA"/>
</dbReference>
<dbReference type="EMBL" id="U71268">
    <property type="protein sequence ID" value="AAD00180.1"/>
    <property type="status" value="ALT_FRAME"/>
    <property type="molecule type" value="mRNA"/>
</dbReference>
<dbReference type="EMBL" id="AF180475">
    <property type="protein sequence ID" value="AAF29829.1"/>
    <property type="molecule type" value="mRNA"/>
</dbReference>
<dbReference type="EMBL" id="AL389980">
    <property type="protein sequence ID" value="CAB97536.1"/>
    <property type="molecule type" value="mRNA"/>
</dbReference>
<dbReference type="EMBL" id="AK074671">
    <property type="protein sequence ID" value="BAC11125.1"/>
    <property type="status" value="ALT_INIT"/>
    <property type="molecule type" value="mRNA"/>
</dbReference>
<dbReference type="EMBL" id="AK300365">
    <property type="protein sequence ID" value="BAH13270.1"/>
    <property type="molecule type" value="mRNA"/>
</dbReference>
<dbReference type="EMBL" id="AC083871">
    <property type="status" value="NOT_ANNOTATED_CDS"/>
    <property type="molecule type" value="Genomic_DNA"/>
</dbReference>
<dbReference type="EMBL" id="AC074002">
    <property type="status" value="NOT_ANNOTATED_CDS"/>
    <property type="molecule type" value="Genomic_DNA"/>
</dbReference>
<dbReference type="EMBL" id="BC035590">
    <property type="protein sequence ID" value="AAH35590.1"/>
    <property type="molecule type" value="mRNA"/>
</dbReference>
<dbReference type="EMBL" id="AF091094">
    <property type="protein sequence ID" value="AAC72963.1"/>
    <property type="status" value="ALT_SEQ"/>
    <property type="molecule type" value="mRNA"/>
</dbReference>
<dbReference type="CCDS" id="CCDS43650.1">
    <molecule id="O95628-8"/>
</dbReference>
<dbReference type="CCDS" id="CCDS47719.1">
    <molecule id="O95628-2"/>
</dbReference>
<dbReference type="CCDS" id="CCDS55164.1">
    <molecule id="O95628-4"/>
</dbReference>
<dbReference type="CCDS" id="CCDS55165.1">
    <molecule id="O95628-10"/>
</dbReference>
<dbReference type="CCDS" id="CCDS55166.1">
    <molecule id="O95628-1"/>
</dbReference>
<dbReference type="CCDS" id="CCDS55167.1">
    <molecule id="O95628-9"/>
</dbReference>
<dbReference type="RefSeq" id="NP_001008226.1">
    <molecule id="O95628-2"/>
    <property type="nucleotide sequence ID" value="NM_001008225.3"/>
</dbReference>
<dbReference type="RefSeq" id="NP_001177776.1">
    <molecule id="O95628-4"/>
    <property type="nucleotide sequence ID" value="NM_001190847.2"/>
</dbReference>
<dbReference type="RefSeq" id="NP_001177777.1">
    <molecule id="O95628-1"/>
    <property type="nucleotide sequence ID" value="NM_001190848.2"/>
</dbReference>
<dbReference type="RefSeq" id="NP_001177778.1">
    <molecule id="O95628-9"/>
    <property type="nucleotide sequence ID" value="NM_001190849.2"/>
</dbReference>
<dbReference type="RefSeq" id="NP_001177779.1">
    <molecule id="O95628-10"/>
    <property type="nucleotide sequence ID" value="NM_001190850.2"/>
</dbReference>
<dbReference type="RefSeq" id="NP_001380299.1">
    <molecule id="O95628-10"/>
    <property type="nucleotide sequence ID" value="NM_001393370.1"/>
</dbReference>
<dbReference type="RefSeq" id="NP_001380303.1">
    <molecule id="O95628-8"/>
    <property type="nucleotide sequence ID" value="NM_001393374.1"/>
</dbReference>
<dbReference type="RefSeq" id="NP_037448.2">
    <molecule id="O95628-8"/>
    <property type="nucleotide sequence ID" value="NM_013316.4"/>
</dbReference>
<dbReference type="RefSeq" id="XP_016867724.1">
    <property type="nucleotide sequence ID" value="XM_017012235.1"/>
</dbReference>
<dbReference type="RefSeq" id="XP_047276368.1">
    <molecule id="O95628-9"/>
    <property type="nucleotide sequence ID" value="XM_047420412.1"/>
</dbReference>
<dbReference type="RefSeq" id="XP_047276369.1">
    <molecule id="O95628-4"/>
    <property type="nucleotide sequence ID" value="XM_047420413.1"/>
</dbReference>
<dbReference type="RefSeq" id="XP_047276370.1">
    <molecule id="O95628-1"/>
    <property type="nucleotide sequence ID" value="XM_047420414.1"/>
</dbReference>
<dbReference type="RefSeq" id="XP_047276371.1">
    <molecule id="O95628-2"/>
    <property type="nucleotide sequence ID" value="XM_047420415.1"/>
</dbReference>
<dbReference type="RefSeq" id="XP_054214243.1">
    <molecule id="O95628-9"/>
    <property type="nucleotide sequence ID" value="XM_054358268.1"/>
</dbReference>
<dbReference type="RefSeq" id="XP_054214244.1">
    <molecule id="O95628-4"/>
    <property type="nucleotide sequence ID" value="XM_054358269.1"/>
</dbReference>
<dbReference type="RefSeq" id="XP_054214245.1">
    <molecule id="O95628-1"/>
    <property type="nucleotide sequence ID" value="XM_054358270.1"/>
</dbReference>
<dbReference type="RefSeq" id="XP_054214246.1">
    <molecule id="O95628-2"/>
    <property type="nucleotide sequence ID" value="XM_054358271.1"/>
</dbReference>
<dbReference type="PDB" id="1E4U">
    <property type="method" value="NMR"/>
    <property type="chains" value="A=1-78"/>
</dbReference>
<dbReference type="PDB" id="1UR6">
    <property type="method" value="NMR"/>
    <property type="chains" value="B=12-63"/>
</dbReference>
<dbReference type="PDBsum" id="1E4U"/>
<dbReference type="PDBsum" id="1UR6"/>
<dbReference type="BMRB" id="O95628"/>
<dbReference type="SMR" id="O95628"/>
<dbReference type="BioGRID" id="110912">
    <property type="interactions" value="76"/>
</dbReference>
<dbReference type="ComplexPortal" id="CPX-2522">
    <property type="entry name" value="CCR4-NOT mRNA deadenylase complex, CNOT6L-CNOT7 variant"/>
</dbReference>
<dbReference type="ComplexPortal" id="CPX-2535">
    <property type="entry name" value="CCR4-NOT mRNA deadenylase complex, CNOT6L-CNOT8 variant"/>
</dbReference>
<dbReference type="ComplexPortal" id="CPX-2849">
    <property type="entry name" value="CCR4-NOT mRNA deadenylase complex, CNOT6-CNOT8 variant"/>
</dbReference>
<dbReference type="ComplexPortal" id="CPX-707">
    <property type="entry name" value="CCR4-NOT mRNA deadenylase complex, CNOT6-CNOT7 variant"/>
</dbReference>
<dbReference type="FunCoup" id="O95628">
    <property type="interactions" value="1999"/>
</dbReference>
<dbReference type="IntAct" id="O95628">
    <property type="interactions" value="19"/>
</dbReference>
<dbReference type="STRING" id="9606.ENSP00000445508"/>
<dbReference type="ChEMBL" id="CHEMBL4105770"/>
<dbReference type="GlyCosmos" id="O95628">
    <property type="glycosylation" value="7 sites, 2 glycans"/>
</dbReference>
<dbReference type="GlyGen" id="O95628">
    <property type="glycosylation" value="11 sites, 6 N-linked glycans (1 site), 2 O-linked glycans (10 sites)"/>
</dbReference>
<dbReference type="iPTMnet" id="O95628"/>
<dbReference type="PhosphoSitePlus" id="O95628"/>
<dbReference type="BioMuta" id="CNOT4"/>
<dbReference type="jPOST" id="O95628"/>
<dbReference type="MassIVE" id="O95628"/>
<dbReference type="PaxDb" id="9606-ENSP00000445508"/>
<dbReference type="PeptideAtlas" id="O95628"/>
<dbReference type="ProteomicsDB" id="18118"/>
<dbReference type="ProteomicsDB" id="28333"/>
<dbReference type="ProteomicsDB" id="50958">
    <molecule id="O95628-1"/>
</dbReference>
<dbReference type="ProteomicsDB" id="50959">
    <molecule id="O95628-2"/>
</dbReference>
<dbReference type="ProteomicsDB" id="50960">
    <molecule id="O95628-3"/>
</dbReference>
<dbReference type="ProteomicsDB" id="50961">
    <molecule id="O95628-4"/>
</dbReference>
<dbReference type="ProteomicsDB" id="50962">
    <molecule id="O95628-5"/>
</dbReference>
<dbReference type="ProteomicsDB" id="50963">
    <molecule id="O95628-6"/>
</dbReference>
<dbReference type="ProteomicsDB" id="50964">
    <molecule id="O95628-7"/>
</dbReference>
<dbReference type="ProteomicsDB" id="50965">
    <molecule id="O95628-8"/>
</dbReference>
<dbReference type="Pumba" id="O95628"/>
<dbReference type="Antibodypedia" id="1419">
    <property type="antibodies" value="641 antibodies from 38 providers"/>
</dbReference>
<dbReference type="DNASU" id="4850"/>
<dbReference type="Ensembl" id="ENST00000315544.6">
    <molecule id="O95628-1"/>
    <property type="protein sequence ID" value="ENSP00000326731.5"/>
    <property type="gene ID" value="ENSG00000080802.21"/>
</dbReference>
<dbReference type="Ensembl" id="ENST00000361528.8">
    <molecule id="O95628-8"/>
    <property type="protein sequence ID" value="ENSP00000354673.4"/>
    <property type="gene ID" value="ENSG00000080802.21"/>
</dbReference>
<dbReference type="Ensembl" id="ENST00000414802.5">
    <molecule id="O95628-5"/>
    <property type="protein sequence ID" value="ENSP00000416532.1"/>
    <property type="gene ID" value="ENSG00000080802.21"/>
</dbReference>
<dbReference type="Ensembl" id="ENST00000423368.6">
    <molecule id="O95628-4"/>
    <property type="protein sequence ID" value="ENSP00000406777.2"/>
    <property type="gene ID" value="ENSG00000080802.21"/>
</dbReference>
<dbReference type="Ensembl" id="ENST00000428680.6">
    <molecule id="O95628-2"/>
    <property type="protein sequence ID" value="ENSP00000399108.2"/>
    <property type="gene ID" value="ENSG00000080802.21"/>
</dbReference>
<dbReference type="Ensembl" id="ENST00000451834.5">
    <molecule id="O95628-9"/>
    <property type="protein sequence ID" value="ENSP00000388491.1"/>
    <property type="gene ID" value="ENSG00000080802.21"/>
</dbReference>
<dbReference type="Ensembl" id="ENST00000541284.6">
    <molecule id="O95628-10"/>
    <property type="protein sequence ID" value="ENSP00000445508.1"/>
    <property type="gene ID" value="ENSG00000080802.21"/>
</dbReference>
<dbReference type="Ensembl" id="ENST00000707064.1">
    <molecule id="O95628-1"/>
    <property type="protein sequence ID" value="ENSP00000516715.1"/>
    <property type="gene ID" value="ENSG00000080802.21"/>
</dbReference>
<dbReference type="GeneID" id="4850"/>
<dbReference type="KEGG" id="hsa:4850"/>
<dbReference type="MANE-Select" id="ENST00000541284.6">
    <molecule id="O95628-10"/>
    <property type="protein sequence ID" value="ENSP00000445508.1"/>
    <property type="RefSeq nucleotide sequence ID" value="NM_001190850.2"/>
    <property type="RefSeq protein sequence ID" value="NP_001177779.1"/>
</dbReference>
<dbReference type="UCSC" id="uc003vss.4">
    <molecule id="O95628-1"/>
    <property type="organism name" value="human"/>
</dbReference>
<dbReference type="AGR" id="HGNC:7880"/>
<dbReference type="CTD" id="4850"/>
<dbReference type="DisGeNET" id="4850"/>
<dbReference type="GeneCards" id="CNOT4"/>
<dbReference type="HGNC" id="HGNC:7880">
    <property type="gene designation" value="CNOT4"/>
</dbReference>
<dbReference type="HPA" id="ENSG00000080802">
    <property type="expression patterns" value="Low tissue specificity"/>
</dbReference>
<dbReference type="MIM" id="604911">
    <property type="type" value="gene"/>
</dbReference>
<dbReference type="neXtProt" id="NX_O95628"/>
<dbReference type="OpenTargets" id="ENSG00000080802"/>
<dbReference type="PharmGKB" id="PA26675"/>
<dbReference type="VEuPathDB" id="HostDB:ENSG00000080802"/>
<dbReference type="eggNOG" id="KOG2068">
    <property type="taxonomic scope" value="Eukaryota"/>
</dbReference>
<dbReference type="GeneTree" id="ENSGT00390000000068"/>
<dbReference type="HOGENOM" id="CLU_011836_0_0_1"/>
<dbReference type="InParanoid" id="O95628"/>
<dbReference type="OMA" id="HLFFYCK"/>
<dbReference type="OrthoDB" id="1923159at2759"/>
<dbReference type="PAN-GO" id="O95628">
    <property type="GO annotations" value="3 GO annotations based on evolutionary models"/>
</dbReference>
<dbReference type="PhylomeDB" id="O95628"/>
<dbReference type="TreeFam" id="TF106134"/>
<dbReference type="PathwayCommons" id="O95628"/>
<dbReference type="Reactome" id="R-HSA-429947">
    <property type="pathway name" value="Deadenylation of mRNA"/>
</dbReference>
<dbReference type="Reactome" id="R-HSA-6804115">
    <property type="pathway name" value="TP53 regulates transcription of additional cell cycle genes whose exact role in the p53 pathway remain uncertain"/>
</dbReference>
<dbReference type="Reactome" id="R-HSA-9820841">
    <property type="pathway name" value="M-decay: degradation of maternal mRNAs by maternally stored factors"/>
</dbReference>
<dbReference type="SignaLink" id="O95628"/>
<dbReference type="SIGNOR" id="O95628"/>
<dbReference type="UniPathway" id="UPA00143"/>
<dbReference type="BioGRID-ORCS" id="4850">
    <property type="hits" value="72 hits in 1227 CRISPR screens"/>
</dbReference>
<dbReference type="CD-CODE" id="232F8A39">
    <property type="entry name" value="P-body"/>
</dbReference>
<dbReference type="CD-CODE" id="DEE660B4">
    <property type="entry name" value="Stress granule"/>
</dbReference>
<dbReference type="ChiTaRS" id="CNOT4">
    <property type="organism name" value="human"/>
</dbReference>
<dbReference type="EvolutionaryTrace" id="O95628"/>
<dbReference type="GenomeRNAi" id="4850"/>
<dbReference type="Pharos" id="O95628">
    <property type="development level" value="Tbio"/>
</dbReference>
<dbReference type="PRO" id="PR:O95628"/>
<dbReference type="Proteomes" id="UP000005640">
    <property type="component" value="Chromosome 7"/>
</dbReference>
<dbReference type="RNAct" id="O95628">
    <property type="molecule type" value="protein"/>
</dbReference>
<dbReference type="Bgee" id="ENSG00000080802">
    <property type="expression patterns" value="Expressed in buccal mucosa cell and 215 other cell types or tissues"/>
</dbReference>
<dbReference type="ExpressionAtlas" id="O95628">
    <property type="expression patterns" value="baseline and differential"/>
</dbReference>
<dbReference type="GO" id="GO:0030014">
    <property type="term" value="C:CCR4-NOT complex"/>
    <property type="evidence" value="ECO:0000318"/>
    <property type="project" value="GO_Central"/>
</dbReference>
<dbReference type="GO" id="GO:0005829">
    <property type="term" value="C:cytosol"/>
    <property type="evidence" value="ECO:0000304"/>
    <property type="project" value="Reactome"/>
</dbReference>
<dbReference type="GO" id="GO:0005634">
    <property type="term" value="C:nucleus"/>
    <property type="evidence" value="ECO:0007669"/>
    <property type="project" value="UniProtKB-SubCell"/>
</dbReference>
<dbReference type="GO" id="GO:0003723">
    <property type="term" value="F:RNA binding"/>
    <property type="evidence" value="ECO:0007005"/>
    <property type="project" value="UniProtKB"/>
</dbReference>
<dbReference type="GO" id="GO:0004842">
    <property type="term" value="F:ubiquitin-protein transferase activity"/>
    <property type="evidence" value="ECO:0000314"/>
    <property type="project" value="UniProtKB"/>
</dbReference>
<dbReference type="GO" id="GO:0008270">
    <property type="term" value="F:zinc ion binding"/>
    <property type="evidence" value="ECO:0007669"/>
    <property type="project" value="UniProtKB-KW"/>
</dbReference>
<dbReference type="GO" id="GO:0000289">
    <property type="term" value="P:nuclear-transcribed mRNA poly(A) tail shortening"/>
    <property type="evidence" value="ECO:0000303"/>
    <property type="project" value="ComplexPortal"/>
</dbReference>
<dbReference type="GO" id="GO:0051865">
    <property type="term" value="P:protein autoubiquitination"/>
    <property type="evidence" value="ECO:0000314"/>
    <property type="project" value="UniProtKB"/>
</dbReference>
<dbReference type="GO" id="GO:0016567">
    <property type="term" value="P:protein ubiquitination"/>
    <property type="evidence" value="ECO:0000318"/>
    <property type="project" value="GO_Central"/>
</dbReference>
<dbReference type="GO" id="GO:0045652">
    <property type="term" value="P:regulation of megakaryocyte differentiation"/>
    <property type="evidence" value="ECO:0000314"/>
    <property type="project" value="UniProtKB"/>
</dbReference>
<dbReference type="GO" id="GO:0006511">
    <property type="term" value="P:ubiquitin-dependent protein catabolic process"/>
    <property type="evidence" value="ECO:0000314"/>
    <property type="project" value="UniProtKB"/>
</dbReference>
<dbReference type="CDD" id="cd16618">
    <property type="entry name" value="mRING-HC-C4C4_CNOT4"/>
    <property type="match status" value="1"/>
</dbReference>
<dbReference type="CDD" id="cd12438">
    <property type="entry name" value="RRM_CNOT4"/>
    <property type="match status" value="1"/>
</dbReference>
<dbReference type="FunFam" id="3.30.40.10:FF:000006">
    <property type="entry name" value="CCR4-NOT transcription complex subunit 4"/>
    <property type="match status" value="1"/>
</dbReference>
<dbReference type="FunFam" id="3.30.70.330:FF:000044">
    <property type="entry name" value="Putative ccr4-not transcription complex subunit 4"/>
    <property type="match status" value="1"/>
</dbReference>
<dbReference type="Gene3D" id="3.30.70.330">
    <property type="match status" value="1"/>
</dbReference>
<dbReference type="Gene3D" id="3.30.40.10">
    <property type="entry name" value="Zinc/RING finger domain, C3HC4 (zinc finger)"/>
    <property type="match status" value="1"/>
</dbReference>
<dbReference type="InterPro" id="IPR034261">
    <property type="entry name" value="CNOT4_RRM"/>
</dbReference>
<dbReference type="InterPro" id="IPR039780">
    <property type="entry name" value="Mot2"/>
</dbReference>
<dbReference type="InterPro" id="IPR039515">
    <property type="entry name" value="NOT4_mRING-HC-C4C4"/>
</dbReference>
<dbReference type="InterPro" id="IPR012677">
    <property type="entry name" value="Nucleotide-bd_a/b_plait_sf"/>
</dbReference>
<dbReference type="InterPro" id="IPR035979">
    <property type="entry name" value="RBD_domain_sf"/>
</dbReference>
<dbReference type="InterPro" id="IPR000504">
    <property type="entry name" value="RRM_dom"/>
</dbReference>
<dbReference type="InterPro" id="IPR003954">
    <property type="entry name" value="RRM_dom_euk"/>
</dbReference>
<dbReference type="InterPro" id="IPR000571">
    <property type="entry name" value="Znf_CCCH"/>
</dbReference>
<dbReference type="InterPro" id="IPR001841">
    <property type="entry name" value="Znf_RING"/>
</dbReference>
<dbReference type="InterPro" id="IPR013083">
    <property type="entry name" value="Znf_RING/FYVE/PHD"/>
</dbReference>
<dbReference type="PANTHER" id="PTHR12603">
    <property type="entry name" value="CCR4-NOT TRANSCRIPTION COMPLEX RELATED"/>
    <property type="match status" value="1"/>
</dbReference>
<dbReference type="PANTHER" id="PTHR12603:SF0">
    <property type="entry name" value="CCR4-NOT TRANSCRIPTION COMPLEX SUBUNIT 4"/>
    <property type="match status" value="1"/>
</dbReference>
<dbReference type="Pfam" id="PF00076">
    <property type="entry name" value="RRM_1"/>
    <property type="match status" value="1"/>
</dbReference>
<dbReference type="Pfam" id="PF14570">
    <property type="entry name" value="zf-RING_4"/>
    <property type="match status" value="1"/>
</dbReference>
<dbReference type="SMART" id="SM00361">
    <property type="entry name" value="RRM_1"/>
    <property type="match status" value="1"/>
</dbReference>
<dbReference type="SUPFAM" id="SSF57850">
    <property type="entry name" value="RING/U-box"/>
    <property type="match status" value="1"/>
</dbReference>
<dbReference type="SUPFAM" id="SSF54928">
    <property type="entry name" value="RNA-binding domain, RBD"/>
    <property type="match status" value="1"/>
</dbReference>
<dbReference type="PROSITE" id="PS50102">
    <property type="entry name" value="RRM"/>
    <property type="match status" value="1"/>
</dbReference>
<dbReference type="PROSITE" id="PS50103">
    <property type="entry name" value="ZF_C3H1"/>
    <property type="match status" value="1"/>
</dbReference>
<dbReference type="PROSITE" id="PS50089">
    <property type="entry name" value="ZF_RING_2"/>
    <property type="match status" value="1"/>
</dbReference>
<proteinExistence type="evidence at protein level"/>
<sequence>MSRSPDAKEDPVECPLCMEPLEIDDINFFPCTCGYQICRFCWHRIRTDENGLCPACRKPYPEDPAVYKPLSQEELQRIKNEKKQKQNERKQKISENRKHLASVRVVQKNLVFVVGLSQRLADPEVLKRPEYFGKFGKIHKVVINNSTSYAGSQGPSASAYVTYIRSEDALRAIQCVNNVVVDGRTLKASLGTTKYCSYFLKNMQCPKPDCMYLHELGDEAASFTKEEMQAGKHQEYEQKLLQELYKLNPNFLQLSTGSVDKNKNKVTPLQRYDTPIDKPSDSLSIGNGDNSQQISNSDTPSPPPGLSKSNPVIPISSSNHSARSPFEGAVTESQSLFSDNFRHPNPIPSGLPPFPSSPQTSSDWPTAPEPQSLFTSETIPVSSSTDWQAAFGFGSSKQPEDDLGFDPFDVTRKALADLIEKELSVQDQPSLSPTSLQNSSSHTTTAKGPGSGFLHPAAATNANSLNSTFSVLPQRFPQFQQHRAVYNSFSFPGQAARYPWMAFPRNSIMHLNHTANPTSNSNFLDLNLPPQHNTGLGGIPVAGEEEVKVSTMPLSTSSHSLQQGQQPTSLHTTVA</sequence>
<reference key="1">
    <citation type="submission" date="1996-09" db="EMBL/GenBank/DDBJ databases">
        <title>Isolation and characterization of human and murine homologues of yeast NOT4 gene.</title>
        <authorList>
            <person name="Chiang P.-W."/>
        </authorList>
    </citation>
    <scope>NUCLEOTIDE SEQUENCE [MRNA] (ISOFORMS 1; 3 AND 4)</scope>
</reference>
<reference key="2">
    <citation type="journal article" date="2000" name="Nucleic Acids Res.">
        <title>Isolation and characterization of human orthologs of yeast CCR4-NOT complex subunits.</title>
        <authorList>
            <person name="Albert T.K."/>
            <person name="Lemaire M."/>
            <person name="van Berkum N.L."/>
            <person name="Gentz R."/>
            <person name="Collart M.A."/>
            <person name="Timmers H.T.M."/>
        </authorList>
    </citation>
    <scope>NUCLEOTIDE SEQUENCE [MRNA] (ISOFORM 5)</scope>
</reference>
<reference key="3">
    <citation type="submission" date="2000-07" db="EMBL/GenBank/DDBJ databases">
        <authorList>
            <consortium name="The European IMAGE consortium"/>
        </authorList>
    </citation>
    <scope>NUCLEOTIDE SEQUENCE [LARGE SCALE MRNA] (ISOFORM 2)</scope>
    <scope>VARIANT GLY-7</scope>
</reference>
<reference key="4">
    <citation type="journal article" date="2004" name="Nat. Genet.">
        <title>Complete sequencing and characterization of 21,243 full-length human cDNAs.</title>
        <authorList>
            <person name="Ota T."/>
            <person name="Suzuki Y."/>
            <person name="Nishikawa T."/>
            <person name="Otsuki T."/>
            <person name="Sugiyama T."/>
            <person name="Irie R."/>
            <person name="Wakamatsu A."/>
            <person name="Hayashi K."/>
            <person name="Sato H."/>
            <person name="Nagai K."/>
            <person name="Kimura K."/>
            <person name="Makita H."/>
            <person name="Sekine M."/>
            <person name="Obayashi M."/>
            <person name="Nishi T."/>
            <person name="Shibahara T."/>
            <person name="Tanaka T."/>
            <person name="Ishii S."/>
            <person name="Yamamoto J."/>
            <person name="Saito K."/>
            <person name="Kawai Y."/>
            <person name="Isono Y."/>
            <person name="Nakamura Y."/>
            <person name="Nagahari K."/>
            <person name="Murakami K."/>
            <person name="Yasuda T."/>
            <person name="Iwayanagi T."/>
            <person name="Wagatsuma M."/>
            <person name="Shiratori A."/>
            <person name="Sudo H."/>
            <person name="Hosoiri T."/>
            <person name="Kaku Y."/>
            <person name="Kodaira H."/>
            <person name="Kondo H."/>
            <person name="Sugawara M."/>
            <person name="Takahashi M."/>
            <person name="Kanda K."/>
            <person name="Yokoi T."/>
            <person name="Furuya T."/>
            <person name="Kikkawa E."/>
            <person name="Omura Y."/>
            <person name="Abe K."/>
            <person name="Kamihara K."/>
            <person name="Katsuta N."/>
            <person name="Sato K."/>
            <person name="Tanikawa M."/>
            <person name="Yamazaki M."/>
            <person name="Ninomiya K."/>
            <person name="Ishibashi T."/>
            <person name="Yamashita H."/>
            <person name="Murakawa K."/>
            <person name="Fujimori K."/>
            <person name="Tanai H."/>
            <person name="Kimata M."/>
            <person name="Watanabe M."/>
            <person name="Hiraoka S."/>
            <person name="Chiba Y."/>
            <person name="Ishida S."/>
            <person name="Ono Y."/>
            <person name="Takiguchi S."/>
            <person name="Watanabe S."/>
            <person name="Yosida M."/>
            <person name="Hotuta T."/>
            <person name="Kusano J."/>
            <person name="Kanehori K."/>
            <person name="Takahashi-Fujii A."/>
            <person name="Hara H."/>
            <person name="Tanase T.-O."/>
            <person name="Nomura Y."/>
            <person name="Togiya S."/>
            <person name="Komai F."/>
            <person name="Hara R."/>
            <person name="Takeuchi K."/>
            <person name="Arita M."/>
            <person name="Imose N."/>
            <person name="Musashino K."/>
            <person name="Yuuki H."/>
            <person name="Oshima A."/>
            <person name="Sasaki N."/>
            <person name="Aotsuka S."/>
            <person name="Yoshikawa Y."/>
            <person name="Matsunawa H."/>
            <person name="Ichihara T."/>
            <person name="Shiohata N."/>
            <person name="Sano S."/>
            <person name="Moriya S."/>
            <person name="Momiyama H."/>
            <person name="Satoh N."/>
            <person name="Takami S."/>
            <person name="Terashima Y."/>
            <person name="Suzuki O."/>
            <person name="Nakagawa S."/>
            <person name="Senoh A."/>
            <person name="Mizoguchi H."/>
            <person name="Goto Y."/>
            <person name="Shimizu F."/>
            <person name="Wakebe H."/>
            <person name="Hishigaki H."/>
            <person name="Watanabe T."/>
            <person name="Sugiyama A."/>
            <person name="Takemoto M."/>
            <person name="Kawakami B."/>
            <person name="Yamazaki M."/>
            <person name="Watanabe K."/>
            <person name="Kumagai A."/>
            <person name="Itakura S."/>
            <person name="Fukuzumi Y."/>
            <person name="Fujimori Y."/>
            <person name="Komiyama M."/>
            <person name="Tashiro H."/>
            <person name="Tanigami A."/>
            <person name="Fujiwara T."/>
            <person name="Ono T."/>
            <person name="Yamada K."/>
            <person name="Fujii Y."/>
            <person name="Ozaki K."/>
            <person name="Hirao M."/>
            <person name="Ohmori Y."/>
            <person name="Kawabata A."/>
            <person name="Hikiji T."/>
            <person name="Kobatake N."/>
            <person name="Inagaki H."/>
            <person name="Ikema Y."/>
            <person name="Okamoto S."/>
            <person name="Okitani R."/>
            <person name="Kawakami T."/>
            <person name="Noguchi S."/>
            <person name="Itoh T."/>
            <person name="Shigeta K."/>
            <person name="Senba T."/>
            <person name="Matsumura K."/>
            <person name="Nakajima Y."/>
            <person name="Mizuno T."/>
            <person name="Morinaga M."/>
            <person name="Sasaki M."/>
            <person name="Togashi T."/>
            <person name="Oyama M."/>
            <person name="Hata H."/>
            <person name="Watanabe M."/>
            <person name="Komatsu T."/>
            <person name="Mizushima-Sugano J."/>
            <person name="Satoh T."/>
            <person name="Shirai Y."/>
            <person name="Takahashi Y."/>
            <person name="Nakagawa K."/>
            <person name="Okumura K."/>
            <person name="Nagase T."/>
            <person name="Nomura N."/>
            <person name="Kikuchi H."/>
            <person name="Masuho Y."/>
            <person name="Yamashita R."/>
            <person name="Nakai K."/>
            <person name="Yada T."/>
            <person name="Nakamura Y."/>
            <person name="Ohara O."/>
            <person name="Isogai T."/>
            <person name="Sugano S."/>
        </authorList>
    </citation>
    <scope>NUCLEOTIDE SEQUENCE [LARGE SCALE MRNA] (ISOFORM 9)</scope>
    <scope>NUCLEOTIDE SEQUENCE [LARGE SCALE MRNA] OF 149-575 (ISOFORM 6)</scope>
    <source>
        <tissue>Mammary gland</tissue>
        <tissue>Placenta</tissue>
    </source>
</reference>
<reference key="5">
    <citation type="journal article" date="2003" name="Nature">
        <title>The DNA sequence of human chromosome 7.</title>
        <authorList>
            <person name="Hillier L.W."/>
            <person name="Fulton R.S."/>
            <person name="Fulton L.A."/>
            <person name="Graves T.A."/>
            <person name="Pepin K.H."/>
            <person name="Wagner-McPherson C."/>
            <person name="Layman D."/>
            <person name="Maas J."/>
            <person name="Jaeger S."/>
            <person name="Walker R."/>
            <person name="Wylie K."/>
            <person name="Sekhon M."/>
            <person name="Becker M.C."/>
            <person name="O'Laughlin M.D."/>
            <person name="Schaller M.E."/>
            <person name="Fewell G.A."/>
            <person name="Delehaunty K.D."/>
            <person name="Miner T.L."/>
            <person name="Nash W.E."/>
            <person name="Cordes M."/>
            <person name="Du H."/>
            <person name="Sun H."/>
            <person name="Edwards J."/>
            <person name="Bradshaw-Cordum H."/>
            <person name="Ali J."/>
            <person name="Andrews S."/>
            <person name="Isak A."/>
            <person name="Vanbrunt A."/>
            <person name="Nguyen C."/>
            <person name="Du F."/>
            <person name="Lamar B."/>
            <person name="Courtney L."/>
            <person name="Kalicki J."/>
            <person name="Ozersky P."/>
            <person name="Bielicki L."/>
            <person name="Scott K."/>
            <person name="Holmes A."/>
            <person name="Harkins R."/>
            <person name="Harris A."/>
            <person name="Strong C.M."/>
            <person name="Hou S."/>
            <person name="Tomlinson C."/>
            <person name="Dauphin-Kohlberg S."/>
            <person name="Kozlowicz-Reilly A."/>
            <person name="Leonard S."/>
            <person name="Rohlfing T."/>
            <person name="Rock S.M."/>
            <person name="Tin-Wollam A.-M."/>
            <person name="Abbott A."/>
            <person name="Minx P."/>
            <person name="Maupin R."/>
            <person name="Strowmatt C."/>
            <person name="Latreille P."/>
            <person name="Miller N."/>
            <person name="Johnson D."/>
            <person name="Murray J."/>
            <person name="Woessner J.P."/>
            <person name="Wendl M.C."/>
            <person name="Yang S.-P."/>
            <person name="Schultz B.R."/>
            <person name="Wallis J.W."/>
            <person name="Spieth J."/>
            <person name="Bieri T.A."/>
            <person name="Nelson J.O."/>
            <person name="Berkowicz N."/>
            <person name="Wohldmann P.E."/>
            <person name="Cook L.L."/>
            <person name="Hickenbotham M.T."/>
            <person name="Eldred J."/>
            <person name="Williams D."/>
            <person name="Bedell J.A."/>
            <person name="Mardis E.R."/>
            <person name="Clifton S.W."/>
            <person name="Chissoe S.L."/>
            <person name="Marra M.A."/>
            <person name="Raymond C."/>
            <person name="Haugen E."/>
            <person name="Gillett W."/>
            <person name="Zhou Y."/>
            <person name="James R."/>
            <person name="Phelps K."/>
            <person name="Iadanoto S."/>
            <person name="Bubb K."/>
            <person name="Simms E."/>
            <person name="Levy R."/>
            <person name="Clendenning J."/>
            <person name="Kaul R."/>
            <person name="Kent W.J."/>
            <person name="Furey T.S."/>
            <person name="Baertsch R.A."/>
            <person name="Brent M.R."/>
            <person name="Keibler E."/>
            <person name="Flicek P."/>
            <person name="Bork P."/>
            <person name="Suyama M."/>
            <person name="Bailey J.A."/>
            <person name="Portnoy M.E."/>
            <person name="Torrents D."/>
            <person name="Chinwalla A.T."/>
            <person name="Gish W.R."/>
            <person name="Eddy S.R."/>
            <person name="McPherson J.D."/>
            <person name="Olson M.V."/>
            <person name="Eichler E.E."/>
            <person name="Green E.D."/>
            <person name="Waterston R.H."/>
            <person name="Wilson R.K."/>
        </authorList>
    </citation>
    <scope>NUCLEOTIDE SEQUENCE [LARGE SCALE GENOMIC DNA]</scope>
</reference>
<reference key="6">
    <citation type="journal article" date="2004" name="Genome Res.">
        <title>The status, quality, and expansion of the NIH full-length cDNA project: the Mammalian Gene Collection (MGC).</title>
        <authorList>
            <consortium name="The MGC Project Team"/>
        </authorList>
    </citation>
    <scope>NUCLEOTIDE SEQUENCE [LARGE SCALE MRNA] (ISOFORM 2)</scope>
    <source>
        <tissue>Testis</tissue>
    </source>
</reference>
<reference key="7">
    <citation type="submission" date="1998-08" db="EMBL/GenBank/DDBJ databases">
        <title>Full-insert sequence of mapped XREF EST.</title>
        <authorList>
            <person name="Barrow I.K.-P."/>
            <person name="Boguski M.S."/>
            <person name="Touchman J.W."/>
            <person name="Spencer F."/>
        </authorList>
    </citation>
    <scope>NUCLEOTIDE SEQUENCE [LARGE SCALE MRNA] OF 294-575 (ISOFORM 7)</scope>
</reference>
<reference key="8">
    <citation type="journal article" date="2002" name="EMBO J.">
        <title>Identification of a ubiquitin-protein ligase subunit within the CCR4-NOT transcription repressor complex.</title>
        <authorList>
            <person name="Albert T.K."/>
            <person name="Hanzawa H."/>
            <person name="Legtenberg Y.I.A."/>
            <person name="de Ruwe M.J."/>
            <person name="van den Heuvel F.A.J."/>
            <person name="Collart M.A."/>
            <person name="Boelens R."/>
            <person name="Timmers H.T.M."/>
        </authorList>
    </citation>
    <scope>FUNCTION</scope>
    <scope>CATALYTIC ACTIVITY</scope>
    <scope>UBIQUITINATION</scope>
    <scope>INTERACTION WITH CNOT1 AND UBIQUITIN E2 LIGASES</scope>
    <scope>MUTAGENESIS OF LEU-16; CYS-17; MET-18; CYS-33; TRP-42; ARG-44; ILE-45; GLU-49; PRO-54 AND ARG-57</scope>
    <scope>STRUCTURE BY NMR OF 1-78</scope>
</reference>
<reference key="9">
    <citation type="journal article" date="2004" name="J. Mol. Biol.">
        <title>An altered-specificity ubiquitin-conjugating enzyme/ubiquitin-protein ligase pair.</title>
        <authorList>
            <person name="Winkler G.S."/>
            <person name="Albert T.K."/>
            <person name="Dominguez C."/>
            <person name="Legtenberg Y.I."/>
            <person name="Boelens R."/>
            <person name="Timmers H.T."/>
        </authorList>
    </citation>
    <scope>INTERACTION WITH UBE2D2</scope>
    <scope>AUTOUBIQUITINATION</scope>
    <scope>MUTAGENESIS OF GLU-49</scope>
</reference>
<reference key="10">
    <citation type="journal article" date="2007" name="Science">
        <title>ATM and ATR substrate analysis reveals extensive protein networks responsive to DNA damage.</title>
        <authorList>
            <person name="Matsuoka S."/>
            <person name="Ballif B.A."/>
            <person name="Smogorzewska A."/>
            <person name="McDonald E.R. III"/>
            <person name="Hurov K.E."/>
            <person name="Luo J."/>
            <person name="Bakalarski C.E."/>
            <person name="Zhao Z."/>
            <person name="Solimini N."/>
            <person name="Lerenthal Y."/>
            <person name="Shiloh Y."/>
            <person name="Gygi S.P."/>
            <person name="Elledge S.J."/>
        </authorList>
    </citation>
    <scope>PHOSPHORYLATION [LARGE SCALE ANALYSIS] AT SER-71</scope>
    <scope>IDENTIFICATION BY MASS SPECTROMETRY [LARGE SCALE ANALYSIS]</scope>
    <source>
        <tissue>Embryonic kidney</tissue>
    </source>
</reference>
<reference key="11">
    <citation type="journal article" date="2008" name="Proc. Natl. Acad. Sci. U.S.A.">
        <title>A quantitative atlas of mitotic phosphorylation.</title>
        <authorList>
            <person name="Dephoure N."/>
            <person name="Zhou C."/>
            <person name="Villen J."/>
            <person name="Beausoleil S.A."/>
            <person name="Bakalarski C.E."/>
            <person name="Elledge S.J."/>
            <person name="Gygi S.P."/>
        </authorList>
    </citation>
    <scope>PHOSPHORYLATION [LARGE SCALE ANALYSIS] AT SER-324</scope>
    <scope>IDENTIFICATION BY MASS SPECTROMETRY [LARGE SCALE ANALYSIS]</scope>
    <source>
        <tissue>Cervix carcinoma</tissue>
    </source>
</reference>
<reference key="12">
    <citation type="journal article" date="2009" name="Sci. Signal.">
        <title>Quantitative phosphoproteomic analysis of T cell receptor signaling reveals system-wide modulation of protein-protein interactions.</title>
        <authorList>
            <person name="Mayya V."/>
            <person name="Lundgren D.H."/>
            <person name="Hwang S.-I."/>
            <person name="Rezaul K."/>
            <person name="Wu L."/>
            <person name="Eng J.K."/>
            <person name="Rodionov V."/>
            <person name="Han D.K."/>
        </authorList>
    </citation>
    <scope>PHOSPHORYLATION [LARGE SCALE ANALYSIS] AT SER-324; SER-432 AND SER-490</scope>
    <scope>IDENTIFICATION BY MASS SPECTROMETRY [LARGE SCALE ANALYSIS]</scope>
    <source>
        <tissue>Leukemic T-cell</tissue>
    </source>
</reference>
<reference key="13">
    <citation type="journal article" date="2010" name="Sci. Signal.">
        <title>Quantitative phosphoproteomics reveals widespread full phosphorylation site occupancy during mitosis.</title>
        <authorList>
            <person name="Olsen J.V."/>
            <person name="Vermeulen M."/>
            <person name="Santamaria A."/>
            <person name="Kumar C."/>
            <person name="Miller M.L."/>
            <person name="Jensen L.J."/>
            <person name="Gnad F."/>
            <person name="Cox J."/>
            <person name="Jensen T.S."/>
            <person name="Nigg E.A."/>
            <person name="Brunak S."/>
            <person name="Mann M."/>
        </authorList>
    </citation>
    <scope>PHOSPHORYLATION [LARGE SCALE ANALYSIS] AT SER-324</scope>
    <scope>IDENTIFICATION BY MASS SPECTROMETRY [LARGE SCALE ANALYSIS]</scope>
    <source>
        <tissue>Cervix carcinoma</tissue>
    </source>
</reference>
<reference key="14">
    <citation type="journal article" date="2012" name="FASEB J.">
        <title>Not4 enhances JAK/STAT pathway-dependent gene expression in Drosophila and in human cells.</title>
        <authorList>
            <person name="Gronholm J."/>
            <person name="Kaustio M."/>
            <person name="Myllymaki H."/>
            <person name="Kallio J."/>
            <person name="Saarikettu J."/>
            <person name="Kronhamn J."/>
            <person name="Valanne S."/>
            <person name="Silvennoinen O."/>
            <person name="Ramet M."/>
        </authorList>
    </citation>
    <scope>FUNCTION</scope>
</reference>
<reference key="15">
    <citation type="journal article" date="2013" name="J. Proteome Res.">
        <title>Toward a comprehensive characterization of a human cancer cell phosphoproteome.</title>
        <authorList>
            <person name="Zhou H."/>
            <person name="Di Palma S."/>
            <person name="Preisinger C."/>
            <person name="Peng M."/>
            <person name="Polat A.N."/>
            <person name="Heck A.J."/>
            <person name="Mohammed S."/>
        </authorList>
    </citation>
    <scope>PHOSPHORYLATION [LARGE SCALE ANALYSIS] AT SER-301 AND SER-432</scope>
    <scope>IDENTIFICATION BY MASS SPECTROMETRY [LARGE SCALE ANALYSIS]</scope>
    <source>
        <tissue>Cervix carcinoma</tissue>
        <tissue>Erythroleukemia</tissue>
    </source>
</reference>
<reference key="16">
    <citation type="journal article" date="2014" name="Mol. Cell. Proteomics">
        <title>Immunoaffinity enrichment and mass spectrometry analysis of protein methylation.</title>
        <authorList>
            <person name="Guo A."/>
            <person name="Gu H."/>
            <person name="Zhou J."/>
            <person name="Mulhern D."/>
            <person name="Wang Y."/>
            <person name="Lee K.A."/>
            <person name="Yang V."/>
            <person name="Aguiar M."/>
            <person name="Kornhauser J."/>
            <person name="Jia X."/>
            <person name="Ren J."/>
            <person name="Beausoleil S.A."/>
            <person name="Silva J.C."/>
            <person name="Vemulapalli V."/>
            <person name="Bedford M.T."/>
            <person name="Comb M.J."/>
        </authorList>
    </citation>
    <scope>METHYLATION [LARGE SCALE ANALYSIS] AT ARG-475; ARG-483 AND ARG-497</scope>
    <scope>IDENTIFICATION BY MASS SPECTROMETRY [LARGE SCALE ANALYSIS]</scope>
    <source>
        <tissue>Colon carcinoma</tissue>
    </source>
</reference>
<reference key="17">
    <citation type="journal article" date="2015" name="Elife">
        <title>Cross-talk between PRMT1-mediated methylation and ubiquitylation on RBM15 controls RNA splicing.</title>
        <authorList>
            <person name="Zhang L."/>
            <person name="Tran N.T."/>
            <person name="Su H."/>
            <person name="Wang R."/>
            <person name="Lu Y."/>
            <person name="Tang H."/>
            <person name="Aoyagi S."/>
            <person name="Guo A."/>
            <person name="Khodadadi-Jamayran A."/>
            <person name="Zhou D."/>
            <person name="Qian K."/>
            <person name="Hricik T."/>
            <person name="Cote J."/>
            <person name="Han X."/>
            <person name="Zhou W."/>
            <person name="Laha S."/>
            <person name="Abdel-Wahab O."/>
            <person name="Levine R.L."/>
            <person name="Raffel G."/>
            <person name="Liu Y."/>
            <person name="Chen D."/>
            <person name="Li H."/>
            <person name="Townes T."/>
            <person name="Wang H."/>
            <person name="Deng H."/>
            <person name="Zheng Y.G."/>
            <person name="Leslie C."/>
            <person name="Luo M."/>
            <person name="Zhao X."/>
        </authorList>
    </citation>
    <scope>FUNCTION</scope>
    <scope>CATALYTIC ACTIVITY</scope>
</reference>
<reference key="18">
    <citation type="journal article" date="2018" name="Cell Metab.">
        <title>Ubiquitination of ABCE1 by NOT4 in Response to Mitochondrial Damage Links Co-translational Quality Control to PINK1-Directed Mitophagy.</title>
        <authorList>
            <person name="Wu Z."/>
            <person name="Wang Y."/>
            <person name="Lim J."/>
            <person name="Liu B."/>
            <person name="Li Y."/>
            <person name="Vartak R."/>
            <person name="Stankiewicz T."/>
            <person name="Montgomery S."/>
            <person name="Lu B."/>
        </authorList>
    </citation>
    <scope>FUNCTION</scope>
    <scope>CATALYTIC ACTIVITY</scope>
    <scope>INTERACTION WITH ABCE1; PINK1 AND PELO</scope>
</reference>
<reference key="19">
    <citation type="journal article" date="2001" name="J. Biol. Chem.">
        <title>The structure of the C4C4 ring finger of human NOT4 reveals features distinct from those of C3HC4 RING fingers.</title>
        <authorList>
            <person name="Hanzawa H."/>
            <person name="de Ruwe M.J."/>
            <person name="Albert T.K."/>
            <person name="van Der Vliet P.C."/>
            <person name="Timmers H.T.M."/>
            <person name="Boelens R."/>
        </authorList>
    </citation>
    <scope>STRUCTURE BY NMR OF 1-78 IN COMPLEX WITH ZINC IONS</scope>
</reference>
<organism>
    <name type="scientific">Homo sapiens</name>
    <name type="common">Human</name>
    <dbReference type="NCBI Taxonomy" id="9606"/>
    <lineage>
        <taxon>Eukaryota</taxon>
        <taxon>Metazoa</taxon>
        <taxon>Chordata</taxon>
        <taxon>Craniata</taxon>
        <taxon>Vertebrata</taxon>
        <taxon>Euteleostomi</taxon>
        <taxon>Mammalia</taxon>
        <taxon>Eutheria</taxon>
        <taxon>Euarchontoglires</taxon>
        <taxon>Primates</taxon>
        <taxon>Haplorrhini</taxon>
        <taxon>Catarrhini</taxon>
        <taxon>Hominidae</taxon>
        <taxon>Homo</taxon>
    </lineage>
</organism>
<feature type="chain" id="PRO_0000081679" description="CCR4-NOT transcription complex subunit 4">
    <location>
        <begin position="1"/>
        <end position="575"/>
    </location>
</feature>
<feature type="domain" description="RRM" evidence="3">
    <location>
        <begin position="109"/>
        <end position="189"/>
    </location>
</feature>
<feature type="zinc finger region" description="RING-type; degenerate" evidence="2">
    <location>
        <begin position="14"/>
        <end position="57"/>
    </location>
</feature>
<feature type="zinc finger region" description="C3H1-type" evidence="4">
    <location>
        <begin position="190"/>
        <end position="217"/>
    </location>
</feature>
<feature type="region of interest" description="Disordered" evidence="5">
    <location>
        <begin position="256"/>
        <end position="372"/>
    </location>
</feature>
<feature type="region of interest" description="Disordered" evidence="5">
    <location>
        <begin position="424"/>
        <end position="458"/>
    </location>
</feature>
<feature type="region of interest" description="Disordered" evidence="5">
    <location>
        <begin position="553"/>
        <end position="575"/>
    </location>
</feature>
<feature type="coiled-coil region" evidence="1">
    <location>
        <begin position="68"/>
        <end position="104"/>
    </location>
</feature>
<feature type="compositionally biased region" description="Polar residues" evidence="5">
    <location>
        <begin position="281"/>
        <end position="299"/>
    </location>
</feature>
<feature type="compositionally biased region" description="Polar residues" evidence="5">
    <location>
        <begin position="307"/>
        <end position="322"/>
    </location>
</feature>
<feature type="compositionally biased region" description="Pro residues" evidence="5">
    <location>
        <begin position="345"/>
        <end position="356"/>
    </location>
</feature>
<feature type="compositionally biased region" description="Low complexity" evidence="5">
    <location>
        <begin position="428"/>
        <end position="441"/>
    </location>
</feature>
<feature type="modified residue" description="Phosphoserine" evidence="19">
    <location>
        <position position="71"/>
    </location>
</feature>
<feature type="modified residue" description="Phosphoserine" evidence="23">
    <location>
        <position position="301"/>
    </location>
</feature>
<feature type="modified residue" description="Phosphoserine" evidence="20 21 22">
    <location>
        <position position="324"/>
    </location>
</feature>
<feature type="modified residue" description="Phosphoserine" evidence="21 23">
    <location>
        <position position="432"/>
    </location>
</feature>
<feature type="modified residue" description="Asymmetric dimethylarginine" evidence="24">
    <location>
        <position position="475"/>
    </location>
</feature>
<feature type="modified residue" description="Asymmetric dimethylarginine" evidence="24">
    <location>
        <position position="483"/>
    </location>
</feature>
<feature type="modified residue" description="Phosphoserine" evidence="21">
    <location>
        <position position="490"/>
    </location>
</feature>
<feature type="modified residue" description="Asymmetric dimethylarginine" evidence="24">
    <location>
        <position position="497"/>
    </location>
</feature>
<feature type="splice variant" id="VSP_009923" description="In isoform 3." evidence="15">
    <location>
        <begin position="1"/>
        <end position="17"/>
    </location>
</feature>
<feature type="splice variant" id="VSP_009924" description="In isoform 2, isoform 8 and isoform 9." evidence="13 14 16">
    <original>RYDT</original>
    <variation>S</variation>
    <location>
        <begin position="271"/>
        <end position="274"/>
    </location>
</feature>
<feature type="splice variant" id="VSP_009925" description="In isoform 5." evidence="12">
    <original>IEKELSVQDQPSLSP</original>
    <variation>TEPIERKRLAVLKRR</variation>
    <location>
        <begin position="419"/>
        <end position="433"/>
    </location>
</feature>
<feature type="splice variant" id="VSP_009926" description="In isoform 5." evidence="12">
    <location>
        <begin position="434"/>
        <end position="575"/>
    </location>
</feature>
<feature type="splice variant" id="VSP_009927" description="In isoform 6." evidence="13">
    <original>GEEEVKVSTMPLSTSSHSLQQGQQPTSLHTTVA</original>
    <variation>DNSSSIESLNMKEWQDGLRALLPNININFGGLPNSSSPSNANHSAPTSNTATTDSLSWDSPGSWTDPAIITGIPASSGNSLDSLQDDNPPHWLKSLQALTEMDGPSAAPSQTHHSAPFSTQIPLHRASWNPYPPPSNPSSFHSPPPQIYYRVQHWTAIRQRGATIRKCRICPTLFSPSQPTTHSSLLISYVLKNPVPDQFFFSLTPDAMRSQGHYHLFINCKNFC</variation>
    <location>
        <begin position="543"/>
        <end position="575"/>
    </location>
</feature>
<feature type="splice variant" id="VSP_045469" description="In isoform 9 and isoform 10." evidence="13">
    <original>GEEEVKVSTMPLSTSSHSLQQGQQPTSLHTTVA</original>
    <variation>DNSSSVESLNMKEWQDGLRALLPNININFGGLPNSSSPSNANHSAPTSNTATTDSLSWDSPGSWTDPAIITGIPASSGNSLDSLQDDNPPHWLKSLQALTEMDGPSAAPSQTHHSAPFSTQIPLHRASWNPYPPPSNPSSFHSPPPGFQTAFRPPSKTPTDLLQSSTLDRH</variation>
    <location>
        <begin position="543"/>
        <end position="575"/>
    </location>
</feature>
<feature type="splice variant" id="VSP_009928" description="In isoform 4 and isoform 8." evidence="15">
    <original>EEEVKVSTMPLSTSSHSLQQGQQPTSLHTTVA</original>
    <variation>IPASSGNSLDSLQDDNPPHWLKSLQALTEMDGPSAAPSQTHHSAPFSTQIPLHRASWNPYPPPSNPSSFHSPPPGFQTAFRPPSKTPTDLLQSSTLDRH</variation>
    <location>
        <begin position="544"/>
        <end position="575"/>
    </location>
</feature>
<feature type="splice variant" id="VSP_009929" description="In isoform 7." evidence="17">
    <original>EEEVKVSTMPLSTSSHSLQQGQQPTSLHTTVA</original>
    <variation>IPASSGNSLDSLQDDNPPHWLKSLQALTEMDGQRCSITDPPQRPLQHTDPAAQSQLESLPSSFKPFQLPLPTPRLSDGLQTPQQNPHRFTTEFNTGPPLGKEEQPLENAGFVPLCFLPLSPPPTAPFSSLMF</variation>
    <location>
        <begin position="544"/>
        <end position="575"/>
    </location>
</feature>
<feature type="sequence variant" id="VAR_027833" description="In dbSNP:rs17480616." evidence="11">
    <original>A</original>
    <variation>G</variation>
    <location>
        <position position="7"/>
    </location>
</feature>
<feature type="mutagenesis site" description="Abolishes interaction with E2 ubiquitin ligases." evidence="6">
    <original>L</original>
    <variation>A</variation>
    <variation>E</variation>
    <location>
        <position position="16"/>
    </location>
</feature>
<feature type="mutagenesis site" description="Abolishes interaction with E2 ubiquitin ligases." evidence="6">
    <original>C</original>
    <variation>A</variation>
    <location>
        <position position="17"/>
    </location>
</feature>
<feature type="mutagenesis site" description="Strongly reduces interaction with E2 ubiquitin ligases." evidence="6">
    <original>M</original>
    <variation>A</variation>
    <location>
        <position position="18"/>
    </location>
</feature>
<feature type="mutagenesis site" description="Abolishes interaction with E2 ubiquitin ligases." evidence="6">
    <original>C</original>
    <variation>R</variation>
    <location>
        <position position="33"/>
    </location>
</feature>
<feature type="mutagenesis site" description="Strongly reduces interaction with E2 ubiquitin ligases." evidence="6">
    <original>W</original>
    <variation>A</variation>
    <location>
        <position position="42"/>
    </location>
</feature>
<feature type="mutagenesis site" description="Strongly reduces interaction with E2 ubiquitin ligases." evidence="6">
    <original>R</original>
    <variation>A</variation>
    <variation>E</variation>
    <location>
        <position position="44"/>
    </location>
</feature>
<feature type="mutagenesis site" description="Strongly reduces interaction with E2 ubiquitin ligases." evidence="6">
    <original>I</original>
    <variation>A</variation>
    <variation>W</variation>
    <location>
        <position position="45"/>
    </location>
</feature>
<feature type="mutagenesis site" description="Strongly reduces interaction with E2 ubiquitin ligases." evidence="6 7">
    <original>E</original>
    <variation>A</variation>
    <location>
        <position position="49"/>
    </location>
</feature>
<feature type="mutagenesis site" description="Strongly reduced interaction with UBE2D2." evidence="6 7">
    <original>E</original>
    <variation>K</variation>
    <location>
        <position position="49"/>
    </location>
</feature>
<feature type="mutagenesis site" description="Strongly reduces interaction with E2 ubiquitin ligases." evidence="6">
    <original>P</original>
    <variation>A</variation>
    <location>
        <position position="54"/>
    </location>
</feature>
<feature type="mutagenesis site" description="Strongly reduces interaction with E2 ubiquitin ligases." evidence="6">
    <original>R</original>
    <variation>A</variation>
    <variation>E</variation>
    <location>
        <position position="57"/>
    </location>
</feature>
<feature type="sequence conflict" description="In Ref. 4; BAH13270." evidence="18" ref="4">
    <original>N</original>
    <variation>D</variation>
    <location>
        <position position="178"/>
    </location>
</feature>
<feature type="sequence conflict" description="In Ref. 4; BAH13270." evidence="18" ref="4">
    <original>K</original>
    <variation>R</variation>
    <location>
        <position position="201"/>
    </location>
</feature>
<feature type="sequence conflict" description="In Ref. 6; AAH35590." evidence="18" ref="6">
    <original>N</original>
    <variation>I</variation>
    <location>
        <position position="340"/>
    </location>
</feature>
<feature type="sequence conflict" description="In Ref. 1; AAD00179/AAD00180." evidence="18" ref="1">
    <original>L</original>
    <variation>F</variation>
    <location>
        <position position="570"/>
    </location>
</feature>
<feature type="turn" evidence="25">
    <location>
        <begin position="15"/>
        <end position="17"/>
    </location>
</feature>
<feature type="turn" evidence="25">
    <location>
        <begin position="23"/>
        <end position="27"/>
    </location>
</feature>
<feature type="helix" evidence="25">
    <location>
        <begin position="39"/>
        <end position="45"/>
    </location>
</feature>
<feature type="turn" evidence="25">
    <location>
        <begin position="54"/>
        <end position="56"/>
    </location>
</feature>
<feature type="sequence conflict" description="In Ref. 4; BAH13270." evidence="18" ref="4">
    <original>V</original>
    <variation>I</variation>
    <location sequence="O95628-9">
        <position position="545"/>
    </location>
</feature>
<evidence type="ECO:0000255" key="1"/>
<evidence type="ECO:0000255" key="2">
    <source>
        <dbReference type="PROSITE-ProRule" id="PRU00175"/>
    </source>
</evidence>
<evidence type="ECO:0000255" key="3">
    <source>
        <dbReference type="PROSITE-ProRule" id="PRU00176"/>
    </source>
</evidence>
<evidence type="ECO:0000255" key="4">
    <source>
        <dbReference type="PROSITE-ProRule" id="PRU00723"/>
    </source>
</evidence>
<evidence type="ECO:0000256" key="5">
    <source>
        <dbReference type="SAM" id="MobiDB-lite"/>
    </source>
</evidence>
<evidence type="ECO:0000269" key="6">
    <source>
    </source>
</evidence>
<evidence type="ECO:0000269" key="7">
    <source>
    </source>
</evidence>
<evidence type="ECO:0000269" key="8">
    <source>
    </source>
</evidence>
<evidence type="ECO:0000269" key="9">
    <source>
    </source>
</evidence>
<evidence type="ECO:0000269" key="10">
    <source>
    </source>
</evidence>
<evidence type="ECO:0000269" key="11">
    <source ref="3"/>
</evidence>
<evidence type="ECO:0000303" key="12">
    <source>
    </source>
</evidence>
<evidence type="ECO:0000303" key="13">
    <source>
    </source>
</evidence>
<evidence type="ECO:0000303" key="14">
    <source>
    </source>
</evidence>
<evidence type="ECO:0000303" key="15">
    <source ref="1"/>
</evidence>
<evidence type="ECO:0000303" key="16">
    <source ref="3"/>
</evidence>
<evidence type="ECO:0000303" key="17">
    <source ref="7"/>
</evidence>
<evidence type="ECO:0000305" key="18"/>
<evidence type="ECO:0007744" key="19">
    <source>
    </source>
</evidence>
<evidence type="ECO:0007744" key="20">
    <source>
    </source>
</evidence>
<evidence type="ECO:0007744" key="21">
    <source>
    </source>
</evidence>
<evidence type="ECO:0007744" key="22">
    <source>
    </source>
</evidence>
<evidence type="ECO:0007744" key="23">
    <source>
    </source>
</evidence>
<evidence type="ECO:0007744" key="24">
    <source>
    </source>
</evidence>
<evidence type="ECO:0007829" key="25">
    <source>
        <dbReference type="PDB" id="1E4U"/>
    </source>
</evidence>
<name>CNOT4_HUMAN</name>
<comment type="function">
    <text evidence="6 8 9 10">Has E3 ubiquitin ligase activity, promoting ubiquitination and degradation of target proteins (PubMed:11823428, PubMed:22159038, PubMed:26575292). Involved in activation of the JAK/STAT pathway (PubMed:11823428, PubMed:22159038). Catalyzes ubiquitination of methylated RBM15 (PubMed:26575292). Plays a role in quality control of translation of mitochondrial outer membrane-localized mRNA (PubMed:29861391). As part of the PINK1-regulated signaling, upon mitochondria damage, ubiquitinates ABCE1 and thereby recruits autophagy receptors to the mitochondrial outer membrane to initiate mitophagy (PubMed:29861391).</text>
</comment>
<comment type="catalytic activity">
    <reaction evidence="6 9 10">
        <text>S-ubiquitinyl-[E2 ubiquitin-conjugating enzyme]-L-cysteine + [acceptor protein]-L-lysine = [E2 ubiquitin-conjugating enzyme]-L-cysteine + N(6)-ubiquitinyl-[acceptor protein]-L-lysine.</text>
        <dbReference type="EC" id="2.3.2.27"/>
    </reaction>
</comment>
<comment type="pathway">
    <text evidence="9">Protein modification; protein ubiquitination.</text>
</comment>
<comment type="subunit">
    <text evidence="6 7 10">Interacts with CNOT1 via its C-terminus but does not stably associate with the CCR4-NOT complex (PubMed:11823428). Interacts (via RING domain) with UBE2D2 (PubMed:15001359). Interacts with ABCE1, PINK1 and PELO (PubMed:29861391).</text>
</comment>
<comment type="interaction">
    <interactant intactId="EBI-12019444">
        <id>O95628-2</id>
    </interactant>
    <interactant intactId="EBI-465156">
        <id>Q9UBH0</id>
        <label>IL36RN</label>
    </interactant>
    <organismsDiffer>false</organismsDiffer>
    <experiments>5</experiments>
</comment>
<comment type="subcellular location">
    <subcellularLocation>
        <location evidence="18">Cytoplasm</location>
    </subcellularLocation>
    <subcellularLocation>
        <location evidence="18">Nucleus</location>
    </subcellularLocation>
</comment>
<comment type="alternative products">
    <event type="alternative splicing"/>
    <isoform>
        <id>O95628-1</id>
        <name>1</name>
        <sequence type="displayed"/>
    </isoform>
    <isoform>
        <id>O95628-2</id>
        <name>2</name>
        <sequence type="described" ref="VSP_009924"/>
    </isoform>
    <isoform>
        <id>O95628-3</id>
        <name>3</name>
        <sequence type="described" ref="VSP_009923"/>
    </isoform>
    <isoform>
        <id>O95628-4</id>
        <name>4</name>
        <sequence type="described" ref="VSP_009928"/>
    </isoform>
    <isoform>
        <id>O95628-5</id>
        <name>5</name>
        <sequence type="described" ref="VSP_009925 VSP_009926"/>
    </isoform>
    <isoform>
        <id>O95628-6</id>
        <name>6</name>
        <sequence type="described" ref="VSP_009927"/>
    </isoform>
    <isoform>
        <id>O95628-7</id>
        <name>7</name>
        <sequence type="described" ref="VSP_009929"/>
    </isoform>
    <isoform>
        <id>O95628-8</id>
        <name>8</name>
        <sequence type="described" ref="VSP_009924 VSP_009928"/>
    </isoform>
    <isoform>
        <id>O95628-9</id>
        <name>9</name>
        <sequence type="described" ref="VSP_009924 VSP_045469"/>
    </isoform>
    <isoform>
        <id>O95628-10</id>
        <name>10</name>
        <sequence type="described" ref="VSP_045469"/>
    </isoform>
</comment>
<comment type="PTM">
    <text evidence="6 7">Autoubiquitinated.</text>
</comment>
<comment type="sequence caution" evidence="18">
    <conflict type="frameshift">
        <sequence resource="EMBL-CDS" id="AAC72963"/>
    </conflict>
</comment>
<comment type="sequence caution" evidence="18">
    <conflict type="miscellaneous discrepancy">
        <sequence resource="EMBL-CDS" id="AAC72963"/>
    </conflict>
    <text>Sequencing errors.</text>
</comment>
<comment type="sequence caution" evidence="18">
    <conflict type="frameshift">
        <sequence resource="EMBL-CDS" id="AAD00180"/>
    </conflict>
</comment>
<comment type="sequence caution" evidence="18">
    <conflict type="erroneous initiation">
        <sequence resource="EMBL-CDS" id="BAC11125"/>
    </conflict>
</comment>
<protein>
    <recommendedName>
        <fullName>CCR4-NOT transcription complex subunit 4</fullName>
        <ecNumber evidence="6 9 10">2.3.2.27</ecNumber>
    </recommendedName>
    <alternativeName>
        <fullName>CCR4-associated factor 4</fullName>
    </alternativeName>
    <alternativeName>
        <fullName>E3 ubiquitin-protein ligase CNOT4</fullName>
    </alternativeName>
    <alternativeName>
        <fullName>Potential transcriptional repressor NOT4Hp</fullName>
    </alternativeName>
    <alternativeName>
        <fullName evidence="18">RING-type E3 ubiquitin transferase CNOT4</fullName>
    </alternativeName>
</protein>